<proteinExistence type="inferred from homology"/>
<protein>
    <recommendedName>
        <fullName evidence="1">Cytochrome b6</fullName>
    </recommendedName>
</protein>
<organism>
    <name type="scientific">Synechococcus sp. (strain ATCC 27144 / PCC 6301 / SAUG 1402/1)</name>
    <name type="common">Anacystis nidulans</name>
    <dbReference type="NCBI Taxonomy" id="269084"/>
    <lineage>
        <taxon>Bacteria</taxon>
        <taxon>Bacillati</taxon>
        <taxon>Cyanobacteriota</taxon>
        <taxon>Cyanophyceae</taxon>
        <taxon>Synechococcales</taxon>
        <taxon>Synechococcaceae</taxon>
        <taxon>Synechococcus</taxon>
    </lineage>
</organism>
<gene>
    <name evidence="1" type="primary">petB</name>
    <name type="ordered locus">syc1771_c</name>
</gene>
<name>CYB6_SYNP6</name>
<feature type="chain" id="PRO_0000061835" description="Cytochrome b6">
    <location>
        <begin position="1"/>
        <end position="215"/>
    </location>
</feature>
<feature type="transmembrane region" description="Helical" evidence="1">
    <location>
        <begin position="32"/>
        <end position="52"/>
    </location>
</feature>
<feature type="transmembrane region" description="Helical" evidence="1">
    <location>
        <begin position="90"/>
        <end position="110"/>
    </location>
</feature>
<feature type="transmembrane region" description="Helical" evidence="1">
    <location>
        <begin position="116"/>
        <end position="136"/>
    </location>
</feature>
<feature type="transmembrane region" description="Helical" evidence="1">
    <location>
        <begin position="186"/>
        <end position="206"/>
    </location>
</feature>
<feature type="binding site" description="covalent" evidence="1">
    <location>
        <position position="35"/>
    </location>
    <ligand>
        <name>heme c</name>
        <dbReference type="ChEBI" id="CHEBI:61717"/>
    </ligand>
</feature>
<feature type="binding site" description="axial binding residue" evidence="1">
    <location>
        <position position="86"/>
    </location>
    <ligand>
        <name>heme b</name>
        <dbReference type="ChEBI" id="CHEBI:60344"/>
        <label>2</label>
    </ligand>
    <ligandPart>
        <name>Fe</name>
        <dbReference type="ChEBI" id="CHEBI:18248"/>
    </ligandPart>
</feature>
<feature type="binding site" description="axial binding residue" evidence="1">
    <location>
        <position position="100"/>
    </location>
    <ligand>
        <name>heme b</name>
        <dbReference type="ChEBI" id="CHEBI:60344"/>
        <label>1</label>
    </ligand>
    <ligandPart>
        <name>Fe</name>
        <dbReference type="ChEBI" id="CHEBI:18248"/>
    </ligandPart>
</feature>
<feature type="binding site" description="axial binding residue" evidence="1">
    <location>
        <position position="187"/>
    </location>
    <ligand>
        <name>heme b</name>
        <dbReference type="ChEBI" id="CHEBI:60344"/>
        <label>2</label>
    </ligand>
    <ligandPart>
        <name>Fe</name>
        <dbReference type="ChEBI" id="CHEBI:18248"/>
    </ligandPart>
</feature>
<feature type="binding site" description="axial binding residue" evidence="1">
    <location>
        <position position="202"/>
    </location>
    <ligand>
        <name>heme b</name>
        <dbReference type="ChEBI" id="CHEBI:60344"/>
        <label>1</label>
    </ligand>
    <ligandPart>
        <name>Fe</name>
        <dbReference type="ChEBI" id="CHEBI:18248"/>
    </ligandPart>
</feature>
<dbReference type="EMBL" id="AP008231">
    <property type="protein sequence ID" value="BAD79961.1"/>
    <property type="molecule type" value="Genomic_DNA"/>
</dbReference>
<dbReference type="RefSeq" id="WP_011244081.1">
    <property type="nucleotide sequence ID" value="NZ_CP085785.1"/>
</dbReference>
<dbReference type="SMR" id="Q5N159"/>
<dbReference type="KEGG" id="syc:syc1771_c"/>
<dbReference type="eggNOG" id="COG1290">
    <property type="taxonomic scope" value="Bacteria"/>
</dbReference>
<dbReference type="Proteomes" id="UP000001175">
    <property type="component" value="Chromosome"/>
</dbReference>
<dbReference type="GO" id="GO:0031676">
    <property type="term" value="C:plasma membrane-derived thylakoid membrane"/>
    <property type="evidence" value="ECO:0007669"/>
    <property type="project" value="UniProtKB-SubCell"/>
</dbReference>
<dbReference type="GO" id="GO:0045158">
    <property type="term" value="F:electron transporter, transferring electrons within cytochrome b6/f complex of photosystem II activity"/>
    <property type="evidence" value="ECO:0007669"/>
    <property type="project" value="UniProtKB-UniRule"/>
</dbReference>
<dbReference type="GO" id="GO:0046872">
    <property type="term" value="F:metal ion binding"/>
    <property type="evidence" value="ECO:0007669"/>
    <property type="project" value="UniProtKB-KW"/>
</dbReference>
<dbReference type="GO" id="GO:0016491">
    <property type="term" value="F:oxidoreductase activity"/>
    <property type="evidence" value="ECO:0007669"/>
    <property type="project" value="InterPro"/>
</dbReference>
<dbReference type="GO" id="GO:0015979">
    <property type="term" value="P:photosynthesis"/>
    <property type="evidence" value="ECO:0007669"/>
    <property type="project" value="UniProtKB-UniRule"/>
</dbReference>
<dbReference type="GO" id="GO:0022904">
    <property type="term" value="P:respiratory electron transport chain"/>
    <property type="evidence" value="ECO:0007669"/>
    <property type="project" value="InterPro"/>
</dbReference>
<dbReference type="CDD" id="cd00284">
    <property type="entry name" value="Cytochrome_b_N"/>
    <property type="match status" value="1"/>
</dbReference>
<dbReference type="FunFam" id="1.20.810.10:FF:000001">
    <property type="entry name" value="Cytochrome b6"/>
    <property type="match status" value="1"/>
</dbReference>
<dbReference type="Gene3D" id="1.20.810.10">
    <property type="entry name" value="Cytochrome Bc1 Complex, Chain C"/>
    <property type="match status" value="1"/>
</dbReference>
<dbReference type="HAMAP" id="MF_00633">
    <property type="entry name" value="Cytb6_f_cytb6"/>
    <property type="match status" value="1"/>
</dbReference>
<dbReference type="InterPro" id="IPR005797">
    <property type="entry name" value="Cyt_b/b6_N"/>
</dbReference>
<dbReference type="InterPro" id="IPR023530">
    <property type="entry name" value="Cyt_B6_PetB"/>
</dbReference>
<dbReference type="InterPro" id="IPR027387">
    <property type="entry name" value="Cytb/b6-like_sf"/>
</dbReference>
<dbReference type="InterPro" id="IPR048259">
    <property type="entry name" value="Cytochrome_b_N_euk/bac"/>
</dbReference>
<dbReference type="InterPro" id="IPR016174">
    <property type="entry name" value="Di-haem_cyt_TM"/>
</dbReference>
<dbReference type="NCBIfam" id="NF002990">
    <property type="entry name" value="PRK03735.1"/>
    <property type="match status" value="1"/>
</dbReference>
<dbReference type="PANTHER" id="PTHR19271">
    <property type="entry name" value="CYTOCHROME B"/>
    <property type="match status" value="1"/>
</dbReference>
<dbReference type="PANTHER" id="PTHR19271:SF16">
    <property type="entry name" value="CYTOCHROME B"/>
    <property type="match status" value="1"/>
</dbReference>
<dbReference type="Pfam" id="PF00033">
    <property type="entry name" value="Cytochrome_B"/>
    <property type="match status" value="1"/>
</dbReference>
<dbReference type="PIRSF" id="PIRSF000032">
    <property type="entry name" value="Cytochrome_b6"/>
    <property type="match status" value="1"/>
</dbReference>
<dbReference type="SUPFAM" id="SSF81342">
    <property type="entry name" value="Transmembrane di-heme cytochromes"/>
    <property type="match status" value="1"/>
</dbReference>
<dbReference type="PROSITE" id="PS51002">
    <property type="entry name" value="CYTB_NTER"/>
    <property type="match status" value="1"/>
</dbReference>
<keyword id="KW-0249">Electron transport</keyword>
<keyword id="KW-0349">Heme</keyword>
<keyword id="KW-0408">Iron</keyword>
<keyword id="KW-0472">Membrane</keyword>
<keyword id="KW-0479">Metal-binding</keyword>
<keyword id="KW-0602">Photosynthesis</keyword>
<keyword id="KW-0793">Thylakoid</keyword>
<keyword id="KW-0812">Transmembrane</keyword>
<keyword id="KW-1133">Transmembrane helix</keyword>
<keyword id="KW-0813">Transport</keyword>
<evidence type="ECO:0000255" key="1">
    <source>
        <dbReference type="HAMAP-Rule" id="MF_00633"/>
    </source>
</evidence>
<reference key="1">
    <citation type="journal article" date="2007" name="Photosyn. Res.">
        <title>Complete nucleotide sequence of the freshwater unicellular cyanobacterium Synechococcus elongatus PCC 6301 chromosome: gene content and organization.</title>
        <authorList>
            <person name="Sugita C."/>
            <person name="Ogata K."/>
            <person name="Shikata M."/>
            <person name="Jikuya H."/>
            <person name="Takano J."/>
            <person name="Furumichi M."/>
            <person name="Kanehisa M."/>
            <person name="Omata T."/>
            <person name="Sugiura M."/>
            <person name="Sugita M."/>
        </authorList>
    </citation>
    <scope>NUCLEOTIDE SEQUENCE [LARGE SCALE GENOMIC DNA]</scope>
    <source>
        <strain>ATCC 27144 / PCC 6301 / SAUG 1402/1</strain>
    </source>
</reference>
<sequence>MSKVYDWFEERLEIQAIAEDVSSKYVPPHVNIFYCLGGITLTCFLIQFATGFAMTFYYKPTVAEAYSSVQFIMNQVNFGWLIRSIHRWSASMMVLMMILHVFRVYLTGGFKRPRELTWVTGVVMAVITVTFGVTGYSLPWDQVGYWAVKIVSGVPEAIPVVGSAMVELLRGGQSVGQATLTRFYSLHTFVLPWLIAVFMLLHFLMIRKQGISGPL</sequence>
<comment type="function">
    <text evidence="1">Component of the cytochrome b6-f complex, which mediates electron transfer between photosystem II (PSII) and photosystem I (PSI), cyclic electron flow around PSI, and state transitions.</text>
</comment>
<comment type="cofactor">
    <cofactor evidence="1">
        <name>heme b</name>
        <dbReference type="ChEBI" id="CHEBI:60344"/>
    </cofactor>
    <text evidence="1">Binds 2 heme b groups non-covalently with two histidine residues as axial ligands.</text>
</comment>
<comment type="cofactor">
    <cofactor evidence="1">
        <name>heme c</name>
        <dbReference type="ChEBI" id="CHEBI:61717"/>
    </cofactor>
    <text evidence="1">Binds one heme group covalently by a single cysteine link with no axial amino acid ligand. This heme was named heme ci.</text>
</comment>
<comment type="subunit">
    <text evidence="1">The 4 large subunits of the cytochrome b6-f complex are cytochrome b6, subunit IV (17 kDa polypeptide, PetD), cytochrome f and the Rieske protein, while the 4 small subunits are PetG, PetL, PetM and PetN. The complex functions as a dimer.</text>
</comment>
<comment type="subcellular location">
    <subcellularLocation>
        <location evidence="1">Cellular thylakoid membrane</location>
        <topology evidence="1">Multi-pass membrane protein</topology>
    </subcellularLocation>
</comment>
<comment type="miscellaneous">
    <text evidence="1">Heme 1 (or BH or b566) is high-potential and absorbs at about 566 nm, and heme 2 (or BL or b562) is low-potential and absorbs at about 562 nm.</text>
</comment>
<comment type="similarity">
    <text evidence="1">Belongs to the cytochrome b family. PetB subfamily.</text>
</comment>
<accession>Q5N159</accession>